<dbReference type="EC" id="3.6.4.10" evidence="3"/>
<dbReference type="EMBL" id="J03214">
    <property type="protein sequence ID" value="AAA31006.2"/>
    <property type="status" value="ALT_FRAME"/>
    <property type="molecule type" value="mRNA"/>
</dbReference>
<dbReference type="SMR" id="P34935"/>
<dbReference type="STRING" id="9823.ENSSSCP00000055982"/>
<dbReference type="PaxDb" id="9823-ENSSSCP00000006000"/>
<dbReference type="PeptideAtlas" id="P34935"/>
<dbReference type="eggNOG" id="KOG0100">
    <property type="taxonomic scope" value="Eukaryota"/>
</dbReference>
<dbReference type="InParanoid" id="P34935"/>
<dbReference type="Proteomes" id="UP000008227">
    <property type="component" value="Unplaced"/>
</dbReference>
<dbReference type="Proteomes" id="UP000314985">
    <property type="component" value="Unplaced"/>
</dbReference>
<dbReference type="Proteomes" id="UP000694570">
    <property type="component" value="Unplaced"/>
</dbReference>
<dbReference type="Proteomes" id="UP000694571">
    <property type="component" value="Unplaced"/>
</dbReference>
<dbReference type="Proteomes" id="UP000694720">
    <property type="component" value="Unplaced"/>
</dbReference>
<dbReference type="Proteomes" id="UP000694722">
    <property type="component" value="Unplaced"/>
</dbReference>
<dbReference type="Proteomes" id="UP000694723">
    <property type="component" value="Unplaced"/>
</dbReference>
<dbReference type="Proteomes" id="UP000694724">
    <property type="component" value="Unplaced"/>
</dbReference>
<dbReference type="Proteomes" id="UP000694725">
    <property type="component" value="Unplaced"/>
</dbReference>
<dbReference type="Proteomes" id="UP000694726">
    <property type="component" value="Unplaced"/>
</dbReference>
<dbReference type="Proteomes" id="UP000694727">
    <property type="component" value="Unplaced"/>
</dbReference>
<dbReference type="Proteomes" id="UP000694728">
    <property type="component" value="Unplaced"/>
</dbReference>
<dbReference type="GO" id="GO:0009986">
    <property type="term" value="C:cell surface"/>
    <property type="evidence" value="ECO:0007669"/>
    <property type="project" value="UniProtKB-SubCell"/>
</dbReference>
<dbReference type="GO" id="GO:0005737">
    <property type="term" value="C:cytoplasm"/>
    <property type="evidence" value="ECO:0000250"/>
    <property type="project" value="UniProtKB"/>
</dbReference>
<dbReference type="GO" id="GO:0005829">
    <property type="term" value="C:cytosol"/>
    <property type="evidence" value="ECO:0000250"/>
    <property type="project" value="UniProtKB"/>
</dbReference>
<dbReference type="GO" id="GO:0005788">
    <property type="term" value="C:endoplasmic reticulum lumen"/>
    <property type="evidence" value="ECO:0007669"/>
    <property type="project" value="UniProtKB-SubCell"/>
</dbReference>
<dbReference type="GO" id="GO:0043231">
    <property type="term" value="C:intracellular membrane-bounded organelle"/>
    <property type="evidence" value="ECO:0000250"/>
    <property type="project" value="UniProtKB"/>
</dbReference>
<dbReference type="GO" id="GO:0042470">
    <property type="term" value="C:melanosome"/>
    <property type="evidence" value="ECO:0007669"/>
    <property type="project" value="UniProtKB-SubCell"/>
</dbReference>
<dbReference type="GO" id="GO:0005739">
    <property type="term" value="C:mitochondrion"/>
    <property type="evidence" value="ECO:0000250"/>
    <property type="project" value="UniProtKB"/>
</dbReference>
<dbReference type="GO" id="GO:0005524">
    <property type="term" value="F:ATP binding"/>
    <property type="evidence" value="ECO:0007669"/>
    <property type="project" value="UniProtKB-KW"/>
</dbReference>
<dbReference type="GO" id="GO:0016887">
    <property type="term" value="F:ATP hydrolysis activity"/>
    <property type="evidence" value="ECO:0000250"/>
    <property type="project" value="UniProtKB"/>
</dbReference>
<dbReference type="GO" id="GO:0140662">
    <property type="term" value="F:ATP-dependent protein folding chaperone"/>
    <property type="evidence" value="ECO:0007669"/>
    <property type="project" value="InterPro"/>
</dbReference>
<dbReference type="GO" id="GO:0035437">
    <property type="term" value="P:maintenance of protein localization in endoplasmic reticulum"/>
    <property type="evidence" value="ECO:0000250"/>
    <property type="project" value="UniProtKB"/>
</dbReference>
<dbReference type="GO" id="GO:1903895">
    <property type="term" value="P:negative regulation of IRE1-mediated unfolded protein response"/>
    <property type="evidence" value="ECO:0000250"/>
    <property type="project" value="UniProtKB"/>
</dbReference>
<dbReference type="GO" id="GO:0031333">
    <property type="term" value="P:negative regulation of protein-containing complex assembly"/>
    <property type="evidence" value="ECO:0000250"/>
    <property type="project" value="UniProtKB"/>
</dbReference>
<dbReference type="GO" id="GO:0030335">
    <property type="term" value="P:positive regulation of cell migration"/>
    <property type="evidence" value="ECO:0000250"/>
    <property type="project" value="UniProtKB"/>
</dbReference>
<dbReference type="GO" id="GO:0031204">
    <property type="term" value="P:post-translational protein targeting to membrane, translocation"/>
    <property type="evidence" value="ECO:0000250"/>
    <property type="project" value="UniProtKB"/>
</dbReference>
<dbReference type="FunFam" id="2.60.34.10:FF:000002">
    <property type="entry name" value="Heat shock 70 kDa"/>
    <property type="match status" value="1"/>
</dbReference>
<dbReference type="Gene3D" id="1.20.1270.10">
    <property type="match status" value="1"/>
</dbReference>
<dbReference type="Gene3D" id="3.30.420.40">
    <property type="match status" value="2"/>
</dbReference>
<dbReference type="Gene3D" id="2.60.34.10">
    <property type="entry name" value="Substrate Binding Domain Of DNAk, Chain A, domain 1"/>
    <property type="match status" value="1"/>
</dbReference>
<dbReference type="InterPro" id="IPR043129">
    <property type="entry name" value="ATPase_NBD"/>
</dbReference>
<dbReference type="InterPro" id="IPR018181">
    <property type="entry name" value="Heat_shock_70_CS"/>
</dbReference>
<dbReference type="InterPro" id="IPR029048">
    <property type="entry name" value="HSP70_C_sf"/>
</dbReference>
<dbReference type="InterPro" id="IPR029047">
    <property type="entry name" value="HSP70_peptide-bd_sf"/>
</dbReference>
<dbReference type="InterPro" id="IPR013126">
    <property type="entry name" value="Hsp_70_fam"/>
</dbReference>
<dbReference type="PANTHER" id="PTHR19375">
    <property type="entry name" value="HEAT SHOCK PROTEIN 70KDA"/>
    <property type="match status" value="1"/>
</dbReference>
<dbReference type="Pfam" id="PF00012">
    <property type="entry name" value="HSP70"/>
    <property type="match status" value="1"/>
</dbReference>
<dbReference type="PRINTS" id="PR00301">
    <property type="entry name" value="HEATSHOCK70"/>
</dbReference>
<dbReference type="SUPFAM" id="SSF53067">
    <property type="entry name" value="Actin-like ATPase domain"/>
    <property type="match status" value="1"/>
</dbReference>
<dbReference type="SUPFAM" id="SSF100934">
    <property type="entry name" value="Heat shock protein 70kD (HSP70), C-terminal subdomain"/>
    <property type="match status" value="1"/>
</dbReference>
<dbReference type="SUPFAM" id="SSF100920">
    <property type="entry name" value="Heat shock protein 70kD (HSP70), peptide-binding domain"/>
    <property type="match status" value="1"/>
</dbReference>
<dbReference type="PROSITE" id="PS01036">
    <property type="entry name" value="HSP70_3"/>
    <property type="match status" value="1"/>
</dbReference>
<reference key="1">
    <citation type="journal article" date="1988" name="J. Biol. Chem.">
        <title>hsp70 mRNA accumulates in LLC-PK1 pig kidney cells treated with calcitonin but not with 8-bromo-cyclic AMP.</title>
        <authorList>
            <person name="Andrus L."/>
            <person name="Altus M.S."/>
            <person name="Pearson D."/>
            <person name="Grattan M."/>
            <person name="Nagamine Y."/>
        </authorList>
    </citation>
    <scope>NUCLEOTIDE SEQUENCE [MRNA]</scope>
    <source>
        <tissue>Kidney</tissue>
    </source>
</reference>
<reference key="2">
    <citation type="submission" date="2000-04" db="EMBL/GenBank/DDBJ databases">
        <authorList>
            <person name="Andrus L."/>
            <person name="Altus M.S."/>
            <person name="Pearson D."/>
            <person name="Grattan M."/>
            <person name="Nagamine Y."/>
        </authorList>
    </citation>
    <scope>SEQUENCE REVISION</scope>
</reference>
<protein>
    <recommendedName>
        <fullName evidence="3">Endoplasmic reticulum chaperone BiP</fullName>
        <ecNumber evidence="3">3.6.4.10</ecNumber>
    </recommendedName>
    <alternativeName>
        <fullName evidence="3">78 kDa glucose-regulated protein</fullName>
        <shortName evidence="3">GRP-78</shortName>
    </alternativeName>
    <alternativeName>
        <fullName evidence="3">Binding-immunoglobulin protein</fullName>
        <shortName evidence="3">BiP</shortName>
    </alternativeName>
    <alternativeName>
        <fullName evidence="3">Heat shock protein 70 family protein 5</fullName>
        <shortName evidence="3">HSP70 family protein 5</shortName>
    </alternativeName>
    <alternativeName>
        <fullName evidence="3">Heat shock protein family A member 5</fullName>
    </alternativeName>
    <alternativeName>
        <fullName evidence="3">Immunoglobulin heavy chain-binding protein</fullName>
    </alternativeName>
</protein>
<organism>
    <name type="scientific">Sus scrofa</name>
    <name type="common">Pig</name>
    <dbReference type="NCBI Taxonomy" id="9823"/>
    <lineage>
        <taxon>Eukaryota</taxon>
        <taxon>Metazoa</taxon>
        <taxon>Chordata</taxon>
        <taxon>Craniata</taxon>
        <taxon>Vertebrata</taxon>
        <taxon>Euteleostomi</taxon>
        <taxon>Mammalia</taxon>
        <taxon>Eutheria</taxon>
        <taxon>Laurasiatheria</taxon>
        <taxon>Artiodactyla</taxon>
        <taxon>Suina</taxon>
        <taxon>Suidae</taxon>
        <taxon>Sus</taxon>
    </lineage>
</organism>
<name>BIP_PIG</name>
<accession>P34935</accession>
<feature type="chain" id="PRO_0000078663" description="Endoplasmic reticulum chaperone BiP">
    <location>
        <begin position="1" status="less than"/>
        <end position="262" status="greater than"/>
    </location>
</feature>
<feature type="region of interest" description="Interdomain linker" evidence="1">
    <location>
        <begin position="53"/>
        <end position="63"/>
    </location>
</feature>
<feature type="region of interest" description="Substrate-binding (SBD)" evidence="3">
    <location>
        <begin position="64"/>
        <end position="144"/>
    </location>
</feature>
<feature type="binding site" evidence="3">
    <location>
        <begin position="8"/>
        <end position="11"/>
    </location>
    <ligand>
        <name>ATP</name>
        <dbReference type="ChEBI" id="CHEBI:30616"/>
    </ligand>
</feature>
<feature type="modified residue" description="N6-succinyllysine" evidence="4">
    <location>
        <position position="91"/>
    </location>
</feature>
<feature type="modified residue" description="Omega-N-methylarginine" evidence="2">
    <location>
        <position position="136"/>
    </location>
</feature>
<feature type="modified residue" description="O-AMP-threonine; alternate" evidence="1">
    <location>
        <position position="162"/>
    </location>
</feature>
<feature type="modified residue" description="Phosphothreonine; alternate" evidence="3">
    <location>
        <position position="162"/>
    </location>
</feature>
<feature type="modified residue" description="N6,N6,N6-trimethyllysine; by METTL21A; in vitro" evidence="2">
    <location>
        <position position="229"/>
    </location>
</feature>
<feature type="modified residue" description="N6,N6-dimethyllysine; alternate" evidence="3">
    <location>
        <position position="229"/>
    </location>
</feature>
<feature type="modified residue" description="N6-methyllysine; alternate" evidence="3">
    <location>
        <position position="229"/>
    </location>
</feature>
<feature type="modified residue" description="N6-methyllysine" evidence="3">
    <location>
        <position position="235"/>
    </location>
</feature>
<feature type="non-terminal residue">
    <location>
        <position position="1"/>
    </location>
</feature>
<feature type="non-terminal residue">
    <location>
        <position position="262"/>
    </location>
</feature>
<comment type="function">
    <text evidence="1 3 4">Endoplasmic reticulum chaperone that plays a key role in protein folding and quality control in the endoplasmic reticulum lumen (By similarity). Involved in the correct folding of proteins and degradation of misfolded proteins via its interaction with DNAJC10/ERdj5, probably to facilitate the release of DNAJC10/ERdj5 from its substrate (By similarity). Acts as a key repressor of the EIF2AK3/PERK and ERN1/IRE1-mediated unfolded protein response (UPR). In the unstressed endoplasmic reticulum, recruited by DNAJB9/ERdj4 to the luminal region of ERN1/IRE1, leading to disrupt the dimerization of ERN1/IRE1, thereby inactivating ERN1/IRE1. Also binds and inactivates EIF2AK3/PERK in unstressed cells. Accumulation of misfolded protein in the endoplasmic reticulum causes release of HSPA5/BiP from ERN1/IRE1 and EIF2AK3/PERK, allowing their homodimerization and subsequent activation (By similarity). Plays an auxiliary role in post-translational transport of small presecretory proteins across endoplasmic reticulum (ER). May function as an allosteric modulator for SEC61 channel-forming translocon complex, likely cooperating with SEC62 to enable the productive insertion of these precursors into SEC61 channel. Appears to specifically regulate translocation of precursors having inhibitory residues in their mature region that weaken channel gating. May also play a role in apoptosis and cell proliferation (By similarity).</text>
</comment>
<comment type="catalytic activity">
    <reaction evidence="1">
        <text>ATP + H2O = ADP + phosphate + H(+)</text>
        <dbReference type="Rhea" id="RHEA:13065"/>
        <dbReference type="ChEBI" id="CHEBI:15377"/>
        <dbReference type="ChEBI" id="CHEBI:15378"/>
        <dbReference type="ChEBI" id="CHEBI:30616"/>
        <dbReference type="ChEBI" id="CHEBI:43474"/>
        <dbReference type="ChEBI" id="CHEBI:456216"/>
        <dbReference type="EC" id="3.6.4.10"/>
    </reaction>
</comment>
<comment type="activity regulation">
    <text evidence="1 3">The chaperone activity is regulated by ATP-induced allosteric coupling of the nucleotide-binding (NBD) and substrate-binding (SBD) domains (By similarity). In the ADP-bound and nucleotide-free (apo) states, the two domains have little interaction (By similarity). In contrast, in the ATP-bound state the two domains are tightly coupled, which results in drastically accelerated kinetics in both binding and release of polypeptide substrates (By similarity). J domain-containing co-chaperones (DNAJB9/ERdj4 or DNAJC10/ERdj5) stimulate the ATPase activity and are required for efficient substrate recognition by HSPA5/BiP. Homooligomerization inactivates participating HSPA5/BiP protomers and probably act as reservoirs to store HSPA5/BiP molecules when they are not needed by the cell (By similarity).</text>
</comment>
<comment type="subunit">
    <text evidence="1 3 4">Monomer and homooligomer; homooligomerization via the interdomain linker inactivates the chaperone activity and acts as a storage of HSPA5/BiP molecules (By similarity). Interacts with DNAJC1 (via J domain). Component of an EIF2 complex at least composed of CELF1/CUGBP1, CALR, CALR3, EIF2S1, EIF2S2, HSP90B1 and HSPA5. Part of a large chaperone multiprotein complex comprising DNAJB11, HSP90B1, HSPA5, HYOU, PDIA2, PDIA4, PDIA6, PPIB, SDF2L1, UGGT1 and very small amounts of ERP29, but not, or at very low levels, CALR nor CANX (By similarity). Interacts with TMEM132A and TRIM21 (By similarity). May form a complex with ERLEC1, OS9, SEL1L and SYVN1 (By similarity). Interacts with DNAJC10. Interacts with DNAJB9/ERdj4; leading to recruit HSPA5/BiP to ERN1/IRE1 (By similarity). Interacts with ERN1/IRE1 (via luminal domain); the interaction takes place following interaction with DNAJB9/ERdj4 and leads to inactivate ERN1/IRE1, the interaction also competitively inhibits ERN1 interaction with MANF (By similarity). Interacts directly with MANF (via SAP domain); the interaction inhibits ATP binding to HSPA5/BiP and subsequent nucleotide exchange (By similarity). Interacts with EIF2AK3/PERK (via luminal domain); interaction leads to inactivate EIF2AK3/PERK (By similarity). Interacts with MX1 (By similarity). Interacts with METTL23 (By similarity). Interacts with CEMIP; the interaction induces calcium leakage from the endoplasmic reticulum and cell migration (By similarity). Interacts with PCSK4 form; the interaction takes place in the endoplasmic reticulum (By similarity). Interacts with CIPC (By similarity). Interacts with CCDC88B (via C-terminus); the interaction opposes ERN1-mediated JNK activation, protecting against apoptosis (By similarity). Interacts with INPP5K; necessary for INPP5K localization at the endoplasmic reticulum (By similarity). Interacts with MANF; the interaction is direct (By similarity). Interacts with LOXL2; leading to activate the ERN1/IRE1-XBP1 pathway of the unfolded protein response (By similarity). Interacts with CLU under stressed condition; interaction increases CLU protein stability; facilitates its retrotranslocation and redistribution to the mitochondria; cooperatively suppress stress-induced apoptosis by stabilizing mitochondrial membrane integrity (By similarity). Interacts with CCDC47 (By similarity). Interacts with CLN3 (By similarity). Interacts with ELAPOR1; may regulate the function of HSPA5 in apoptosis and cell proliferation. Interacts with CASP7 (By similarity). Interacts with ILDR2; the interaction stabilizes ILDR2 expression (By similarity). Interacts with ADAM7 (By similarity).</text>
</comment>
<comment type="subcellular location">
    <subcellularLocation>
        <location evidence="3">Endoplasmic reticulum lumen</location>
    </subcellularLocation>
    <subcellularLocation>
        <location evidence="3">Melanosome</location>
    </subcellularLocation>
    <subcellularLocation>
        <location evidence="4">Cytoplasm</location>
    </subcellularLocation>
    <subcellularLocation>
        <location>Cell surface</location>
    </subcellularLocation>
    <text evidence="3">Identified by mass spectrometry in melanosome fractions from stage I to stage IV (By similarity). Localizes to the cell surface in epithelial cells; high levels of free iron promotes cell surface localization (By similarity).</text>
</comment>
<comment type="domain">
    <text evidence="1">The interdomain linker regulates the chaperone activity by mediating the formation of homooligomers. Homooligomers are formed by engagement of the interdomain linker of one HSPA5/BiP molecule as a typical substrate of an adjacent HSPA5/BiP molecule. HSPA5/BiP oligomerization inactivates participating HSPA5/BiP protomers. HSPA5/BiP oligomers probably act as reservoirs to store HSPA5/BiP molecules when they are not needed by the cell. When the levels of unfolded proteins rise, cells can rapidly break up these oligomers to make active monomers.</text>
</comment>
<comment type="PTM">
    <text evidence="1">In unstressed cells, AMPylation at Thr-162 by FICD inactivates the chaperome activity: AMPylated form is locked in a relatively inert state and only weakly stimulated by J domain-containing proteins. In response to endoplasmic reticulum stress, de-AMPylation by the same protein, FICD, restores the chaperone activity.</text>
</comment>
<comment type="similarity">
    <text evidence="5">Belongs to the heat shock protein 70 family.</text>
</comment>
<comment type="sequence caution" evidence="5">
    <conflict type="frameshift">
        <sequence resource="EMBL-CDS" id="AAA31006"/>
    </conflict>
</comment>
<sequence>DEIVLVGGSTRIPKIQQLVKEFFNGKEPSRGINPDEAVAYGAAVQAGVLSGDQDTGDLVLLDVCPLTLGIETVGGVMTKLIPRNTVVPTKKSQIFSTASDNQPTVTIKVYEGERPLTKDNHLLGTFDLTGIPPAPRGVPQIEVTFEIDVNGILRVTAEDKGTGNKNKITITNDQNRLTPEEIERMVNDAEKFAEEDKKLKERIDTRNELESYAYCLKNQIGDKEKLGGKLSSEDKETMEKAVEEKIEWLESHQDADIEDFKA</sequence>
<gene>
    <name evidence="3" type="primary">HSPA5</name>
    <name evidence="3" type="synonym">GRP78</name>
</gene>
<keyword id="KW-0067">ATP-binding</keyword>
<keyword id="KW-0143">Chaperone</keyword>
<keyword id="KW-0963">Cytoplasm</keyword>
<keyword id="KW-0256">Endoplasmic reticulum</keyword>
<keyword id="KW-0378">Hydrolase</keyword>
<keyword id="KW-0488">Methylation</keyword>
<keyword id="KW-0547">Nucleotide-binding</keyword>
<keyword id="KW-0597">Phosphoprotein</keyword>
<keyword id="KW-1185">Reference proteome</keyword>
<proteinExistence type="evidence at transcript level"/>
<evidence type="ECO:0000250" key="1">
    <source>
        <dbReference type="UniProtKB" id="G3I8R9"/>
    </source>
</evidence>
<evidence type="ECO:0000250" key="2">
    <source>
        <dbReference type="UniProtKB" id="P0DMV8"/>
    </source>
</evidence>
<evidence type="ECO:0000250" key="3">
    <source>
        <dbReference type="UniProtKB" id="P11021"/>
    </source>
</evidence>
<evidence type="ECO:0000250" key="4">
    <source>
        <dbReference type="UniProtKB" id="P20029"/>
    </source>
</evidence>
<evidence type="ECO:0000305" key="5"/>